<dbReference type="EC" id="4.1.2.-"/>
<dbReference type="EMBL" id="AE014075">
    <property type="protein sequence ID" value="AAN79383.1"/>
    <property type="status" value="ALT_INIT"/>
    <property type="molecule type" value="Genomic_DNA"/>
</dbReference>
<dbReference type="RefSeq" id="WP_001298570.1">
    <property type="nucleotide sequence ID" value="NZ_CP051263.1"/>
</dbReference>
<dbReference type="SMR" id="Q8FJL3"/>
<dbReference type="STRING" id="199310.c0910"/>
<dbReference type="KEGG" id="ecc:c0910"/>
<dbReference type="eggNOG" id="COG0176">
    <property type="taxonomic scope" value="Bacteria"/>
</dbReference>
<dbReference type="HOGENOM" id="CLU_079764_2_0_6"/>
<dbReference type="Proteomes" id="UP000001410">
    <property type="component" value="Chromosome"/>
</dbReference>
<dbReference type="GO" id="GO:0005737">
    <property type="term" value="C:cytoplasm"/>
    <property type="evidence" value="ECO:0007669"/>
    <property type="project" value="UniProtKB-SubCell"/>
</dbReference>
<dbReference type="GO" id="GO:0097023">
    <property type="term" value="F:fructose 6-phosphate aldolase activity"/>
    <property type="evidence" value="ECO:0007669"/>
    <property type="project" value="RHEA"/>
</dbReference>
<dbReference type="GO" id="GO:0006000">
    <property type="term" value="P:fructose metabolic process"/>
    <property type="evidence" value="ECO:0007669"/>
    <property type="project" value="UniProtKB-UniRule"/>
</dbReference>
<dbReference type="CDD" id="cd00956">
    <property type="entry name" value="Transaldolase_FSA"/>
    <property type="match status" value="1"/>
</dbReference>
<dbReference type="FunFam" id="3.20.20.70:FF:000018">
    <property type="entry name" value="Probable transaldolase"/>
    <property type="match status" value="1"/>
</dbReference>
<dbReference type="Gene3D" id="3.20.20.70">
    <property type="entry name" value="Aldolase class I"/>
    <property type="match status" value="1"/>
</dbReference>
<dbReference type="HAMAP" id="MF_00496">
    <property type="entry name" value="F6P_aldolase"/>
    <property type="match status" value="1"/>
</dbReference>
<dbReference type="InterPro" id="IPR013785">
    <property type="entry name" value="Aldolase_TIM"/>
</dbReference>
<dbReference type="InterPro" id="IPR023001">
    <property type="entry name" value="F6P_aldolase"/>
</dbReference>
<dbReference type="InterPro" id="IPR001585">
    <property type="entry name" value="TAL/FSA"/>
</dbReference>
<dbReference type="InterPro" id="IPR004731">
    <property type="entry name" value="Transaldolase_3B/F6P_aldolase"/>
</dbReference>
<dbReference type="InterPro" id="IPR018225">
    <property type="entry name" value="Transaldolase_AS"/>
</dbReference>
<dbReference type="InterPro" id="IPR033919">
    <property type="entry name" value="TSA/FSA_arc/bac"/>
</dbReference>
<dbReference type="NCBIfam" id="TIGR00875">
    <property type="entry name" value="fsa_talC_mipB"/>
    <property type="match status" value="1"/>
</dbReference>
<dbReference type="NCBIfam" id="NF009296">
    <property type="entry name" value="PRK12653.1"/>
    <property type="match status" value="1"/>
</dbReference>
<dbReference type="PANTHER" id="PTHR10683:SF40">
    <property type="entry name" value="FRUCTOSE-6-PHOSPHATE ALDOLASE 1-RELATED"/>
    <property type="match status" value="1"/>
</dbReference>
<dbReference type="PANTHER" id="PTHR10683">
    <property type="entry name" value="TRANSALDOLASE"/>
    <property type="match status" value="1"/>
</dbReference>
<dbReference type="Pfam" id="PF00923">
    <property type="entry name" value="TAL_FSA"/>
    <property type="match status" value="1"/>
</dbReference>
<dbReference type="SUPFAM" id="SSF51569">
    <property type="entry name" value="Aldolase"/>
    <property type="match status" value="1"/>
</dbReference>
<dbReference type="PROSITE" id="PS01054">
    <property type="entry name" value="TRANSALDOLASE_1"/>
    <property type="match status" value="1"/>
</dbReference>
<dbReference type="PROSITE" id="PS00958">
    <property type="entry name" value="TRANSALDOLASE_2"/>
    <property type="match status" value="1"/>
</dbReference>
<sequence length="220" mass="23012">MELYLDTSDVVAVTALSRIFPLAGVTTNPSIIAAGKKPLEVVLPQLHEAMGGQGRLFAQVMATTAEGMVNDARKLRSIIADIVVKVPVTAEGLAAIKMLKAEGIPTLGTAVYGAAQGLLSALAGAEYVAPYVNRIDAQGGSGIQTVTDLHQLLKMHAPQAKVLAASFKTPRQALDCLLAGCESITLPLDVAQQMISYPAVDAAVAKFEQDWLGAFGRTSI</sequence>
<name>FSAA_ECOL6</name>
<protein>
    <recommendedName>
        <fullName>Fructose-6-phosphate aldolase 1</fullName>
        <ecNumber>4.1.2.-</ecNumber>
    </recommendedName>
</protein>
<feature type="chain" id="PRO_0000173644" description="Fructose-6-phosphate aldolase 1">
    <location>
        <begin position="1"/>
        <end position="220"/>
    </location>
</feature>
<feature type="active site" description="Schiff-base intermediate with substrate" evidence="1">
    <location>
        <position position="85"/>
    </location>
</feature>
<reference key="1">
    <citation type="journal article" date="2002" name="Proc. Natl. Acad. Sci. U.S.A.">
        <title>Extensive mosaic structure revealed by the complete genome sequence of uropathogenic Escherichia coli.</title>
        <authorList>
            <person name="Welch R.A."/>
            <person name="Burland V."/>
            <person name="Plunkett G. III"/>
            <person name="Redford P."/>
            <person name="Roesch P."/>
            <person name="Rasko D."/>
            <person name="Buckles E.L."/>
            <person name="Liou S.-R."/>
            <person name="Boutin A."/>
            <person name="Hackett J."/>
            <person name="Stroud D."/>
            <person name="Mayhew G.F."/>
            <person name="Rose D.J."/>
            <person name="Zhou S."/>
            <person name="Schwartz D.C."/>
            <person name="Perna N.T."/>
            <person name="Mobley H.L.T."/>
            <person name="Donnenberg M.S."/>
            <person name="Blattner F.R."/>
        </authorList>
    </citation>
    <scope>NUCLEOTIDE SEQUENCE [LARGE SCALE GENOMIC DNA]</scope>
    <source>
        <strain>CFT073 / ATCC 700928 / UPEC</strain>
    </source>
</reference>
<comment type="function">
    <text evidence="1">Catalyzes the reversible formation of fructose 6-phosphate from dihydroxyacetone and D-glyceraldehyde 3-phosphate via an aldolization reaction.</text>
</comment>
<comment type="catalytic activity">
    <reaction>
        <text>beta-D-fructose 6-phosphate = dihydroxyacetone + D-glyceraldehyde 3-phosphate</text>
        <dbReference type="Rhea" id="RHEA:28002"/>
        <dbReference type="ChEBI" id="CHEBI:16016"/>
        <dbReference type="ChEBI" id="CHEBI:57634"/>
        <dbReference type="ChEBI" id="CHEBI:59776"/>
    </reaction>
</comment>
<comment type="subunit">
    <text evidence="1">Homodecamer.</text>
</comment>
<comment type="subcellular location">
    <subcellularLocation>
        <location evidence="1">Cytoplasm</location>
    </subcellularLocation>
</comment>
<comment type="similarity">
    <text evidence="2">Belongs to the transaldolase family. Type 3A subfamily.</text>
</comment>
<comment type="sequence caution" evidence="2">
    <conflict type="erroneous initiation">
        <sequence resource="EMBL-CDS" id="AAN79383"/>
    </conflict>
</comment>
<organism>
    <name type="scientific">Escherichia coli O6:H1 (strain CFT073 / ATCC 700928 / UPEC)</name>
    <dbReference type="NCBI Taxonomy" id="199310"/>
    <lineage>
        <taxon>Bacteria</taxon>
        <taxon>Pseudomonadati</taxon>
        <taxon>Pseudomonadota</taxon>
        <taxon>Gammaproteobacteria</taxon>
        <taxon>Enterobacterales</taxon>
        <taxon>Enterobacteriaceae</taxon>
        <taxon>Escherichia</taxon>
    </lineage>
</organism>
<proteinExistence type="inferred from homology"/>
<gene>
    <name type="primary">fsaA</name>
    <name type="synonym">fsa</name>
    <name type="synonym">mipB</name>
    <name type="ordered locus">c0910</name>
</gene>
<keyword id="KW-0119">Carbohydrate metabolism</keyword>
<keyword id="KW-0963">Cytoplasm</keyword>
<keyword id="KW-0456">Lyase</keyword>
<keyword id="KW-1185">Reference proteome</keyword>
<keyword id="KW-0704">Schiff base</keyword>
<evidence type="ECO:0000250" key="1"/>
<evidence type="ECO:0000305" key="2"/>
<accession>Q8FJL3</accession>